<evidence type="ECO:0000250" key="1"/>
<evidence type="ECO:0000250" key="2">
    <source>
        <dbReference type="UniProtKB" id="P00157"/>
    </source>
</evidence>
<evidence type="ECO:0000255" key="3">
    <source>
        <dbReference type="PROSITE-ProRule" id="PRU00967"/>
    </source>
</evidence>
<evidence type="ECO:0000255" key="4">
    <source>
        <dbReference type="PROSITE-ProRule" id="PRU00968"/>
    </source>
</evidence>
<reference key="1">
    <citation type="thesis" date="1997" institute="Queen's University / Kingston" country="Canada">
        <title>Hic Sunt Serpentes -- molecular phylogenetics and the Boidae (Serpentes: Booidea).</title>
        <authorList>
            <person name="Campbell B.N."/>
        </authorList>
    </citation>
    <scope>NUCLEOTIDE SEQUENCE [GENOMIC DNA]</scope>
</reference>
<protein>
    <recommendedName>
        <fullName>Cytochrome b</fullName>
    </recommendedName>
    <alternativeName>
        <fullName>Complex III subunit 3</fullName>
    </alternativeName>
    <alternativeName>
        <fullName>Complex III subunit III</fullName>
    </alternativeName>
    <alternativeName>
        <fullName>Cytochrome b-c1 complex subunit 3</fullName>
    </alternativeName>
    <alternativeName>
        <fullName>Ubiquinol-cytochrome-c reductase complex cytochrome b subunit</fullName>
    </alternativeName>
</protein>
<gene>
    <name type="primary">MT-CYB</name>
    <name type="synonym">COB</name>
    <name type="synonym">CYTB</name>
    <name type="synonym">MTCYB</name>
</gene>
<feature type="chain" id="PRO_0000061479" description="Cytochrome b">
    <location>
        <begin position="1"/>
        <end position="371"/>
    </location>
</feature>
<feature type="transmembrane region" description="Helical" evidence="2">
    <location>
        <begin position="25"/>
        <end position="45"/>
    </location>
</feature>
<feature type="transmembrane region" description="Helical" evidence="2">
    <location>
        <begin position="69"/>
        <end position="90"/>
    </location>
</feature>
<feature type="transmembrane region" description="Helical" evidence="2">
    <location>
        <begin position="105"/>
        <end position="125"/>
    </location>
</feature>
<feature type="transmembrane region" description="Helical" evidence="2">
    <location>
        <begin position="170"/>
        <end position="190"/>
    </location>
</feature>
<feature type="transmembrane region" description="Helical" evidence="2">
    <location>
        <begin position="218"/>
        <end position="238"/>
    </location>
</feature>
<feature type="transmembrane region" description="Helical" evidence="2">
    <location>
        <begin position="280"/>
        <end position="300"/>
    </location>
</feature>
<feature type="transmembrane region" description="Helical" evidence="2">
    <location>
        <begin position="312"/>
        <end position="332"/>
    </location>
</feature>
<feature type="transmembrane region" description="Helical" evidence="2">
    <location>
        <begin position="339"/>
        <end position="358"/>
    </location>
</feature>
<feature type="binding site" description="axial binding residue" evidence="2">
    <location>
        <position position="75"/>
    </location>
    <ligand>
        <name>heme b</name>
        <dbReference type="ChEBI" id="CHEBI:60344"/>
        <label>b562</label>
    </ligand>
    <ligandPart>
        <name>Fe</name>
        <dbReference type="ChEBI" id="CHEBI:18248"/>
    </ligandPart>
</feature>
<feature type="binding site" description="axial binding residue" evidence="2">
    <location>
        <position position="89"/>
    </location>
    <ligand>
        <name>heme b</name>
        <dbReference type="ChEBI" id="CHEBI:60344"/>
        <label>b566</label>
    </ligand>
    <ligandPart>
        <name>Fe</name>
        <dbReference type="ChEBI" id="CHEBI:18248"/>
    </ligandPart>
</feature>
<feature type="binding site" description="axial binding residue" evidence="2">
    <location>
        <position position="174"/>
    </location>
    <ligand>
        <name>heme b</name>
        <dbReference type="ChEBI" id="CHEBI:60344"/>
        <label>b562</label>
    </ligand>
    <ligandPart>
        <name>Fe</name>
        <dbReference type="ChEBI" id="CHEBI:18248"/>
    </ligandPart>
</feature>
<feature type="binding site" description="axial binding residue" evidence="2">
    <location>
        <position position="188"/>
    </location>
    <ligand>
        <name>heme b</name>
        <dbReference type="ChEBI" id="CHEBI:60344"/>
        <label>b566</label>
    </ligand>
    <ligandPart>
        <name>Fe</name>
        <dbReference type="ChEBI" id="CHEBI:18248"/>
    </ligandPart>
</feature>
<feature type="binding site" evidence="2">
    <location>
        <position position="193"/>
    </location>
    <ligand>
        <name>a ubiquinone</name>
        <dbReference type="ChEBI" id="CHEBI:16389"/>
    </ligand>
</feature>
<comment type="function">
    <text evidence="2">Component of the ubiquinol-cytochrome c reductase complex (complex III or cytochrome b-c1 complex) that is part of the mitochondrial respiratory chain. The b-c1 complex mediates electron transfer from ubiquinol to cytochrome c. Contributes to the generation of a proton gradient across the mitochondrial membrane that is then used for ATP synthesis.</text>
</comment>
<comment type="cofactor">
    <cofactor evidence="2">
        <name>heme b</name>
        <dbReference type="ChEBI" id="CHEBI:60344"/>
    </cofactor>
    <text evidence="2">Binds 2 heme b groups non-covalently.</text>
</comment>
<comment type="subunit">
    <text evidence="2">The cytochrome bc1 complex contains 3 respiratory subunits (MT-CYB, CYC1 and UQCRFS1), 2 core proteins (UQCRC1 and UQCRC2) and probably 6 low-molecular weight proteins.</text>
</comment>
<comment type="subcellular location">
    <subcellularLocation>
        <location evidence="2">Mitochondrion inner membrane</location>
        <topology evidence="2">Multi-pass membrane protein</topology>
    </subcellularLocation>
</comment>
<comment type="miscellaneous">
    <text evidence="1">Heme 1 (or BL or b562) is low-potential and absorbs at about 562 nm, and heme 2 (or BH or b566) is high-potential and absorbs at about 566 nm.</text>
</comment>
<comment type="similarity">
    <text evidence="3 4">Belongs to the cytochrome b family.</text>
</comment>
<comment type="caution">
    <text evidence="2">The full-length protein contains only eight transmembrane helices, not nine as predicted by bioinformatics tools.</text>
</comment>
<dbReference type="EMBL" id="U69863">
    <property type="protein sequence ID" value="AAC01897.1"/>
    <property type="molecule type" value="Genomic_DNA"/>
</dbReference>
<dbReference type="SMR" id="O48111"/>
<dbReference type="GO" id="GO:0005743">
    <property type="term" value="C:mitochondrial inner membrane"/>
    <property type="evidence" value="ECO:0007669"/>
    <property type="project" value="UniProtKB-SubCell"/>
</dbReference>
<dbReference type="GO" id="GO:0045275">
    <property type="term" value="C:respiratory chain complex III"/>
    <property type="evidence" value="ECO:0007669"/>
    <property type="project" value="InterPro"/>
</dbReference>
<dbReference type="GO" id="GO:0046872">
    <property type="term" value="F:metal ion binding"/>
    <property type="evidence" value="ECO:0007669"/>
    <property type="project" value="UniProtKB-KW"/>
</dbReference>
<dbReference type="GO" id="GO:0008121">
    <property type="term" value="F:ubiquinol-cytochrome-c reductase activity"/>
    <property type="evidence" value="ECO:0007669"/>
    <property type="project" value="InterPro"/>
</dbReference>
<dbReference type="GO" id="GO:0006122">
    <property type="term" value="P:mitochondrial electron transport, ubiquinol to cytochrome c"/>
    <property type="evidence" value="ECO:0007669"/>
    <property type="project" value="TreeGrafter"/>
</dbReference>
<dbReference type="CDD" id="cd00290">
    <property type="entry name" value="cytochrome_b_C"/>
    <property type="match status" value="1"/>
</dbReference>
<dbReference type="CDD" id="cd00284">
    <property type="entry name" value="Cytochrome_b_N"/>
    <property type="match status" value="1"/>
</dbReference>
<dbReference type="Gene3D" id="1.20.810.10">
    <property type="entry name" value="Cytochrome Bc1 Complex, Chain C"/>
    <property type="match status" value="1"/>
</dbReference>
<dbReference type="InterPro" id="IPR005798">
    <property type="entry name" value="Cyt_b/b6_C"/>
</dbReference>
<dbReference type="InterPro" id="IPR036150">
    <property type="entry name" value="Cyt_b/b6_C_sf"/>
</dbReference>
<dbReference type="InterPro" id="IPR005797">
    <property type="entry name" value="Cyt_b/b6_N"/>
</dbReference>
<dbReference type="InterPro" id="IPR027387">
    <property type="entry name" value="Cytb/b6-like_sf"/>
</dbReference>
<dbReference type="InterPro" id="IPR030689">
    <property type="entry name" value="Cytochrome_b"/>
</dbReference>
<dbReference type="InterPro" id="IPR048260">
    <property type="entry name" value="Cytochrome_b_C_euk/bac"/>
</dbReference>
<dbReference type="InterPro" id="IPR048259">
    <property type="entry name" value="Cytochrome_b_N_euk/bac"/>
</dbReference>
<dbReference type="InterPro" id="IPR016174">
    <property type="entry name" value="Di-haem_cyt_TM"/>
</dbReference>
<dbReference type="PANTHER" id="PTHR19271">
    <property type="entry name" value="CYTOCHROME B"/>
    <property type="match status" value="1"/>
</dbReference>
<dbReference type="PANTHER" id="PTHR19271:SF16">
    <property type="entry name" value="CYTOCHROME B"/>
    <property type="match status" value="1"/>
</dbReference>
<dbReference type="Pfam" id="PF00032">
    <property type="entry name" value="Cytochrom_B_C"/>
    <property type="match status" value="1"/>
</dbReference>
<dbReference type="Pfam" id="PF00033">
    <property type="entry name" value="Cytochrome_B"/>
    <property type="match status" value="1"/>
</dbReference>
<dbReference type="PIRSF" id="PIRSF038885">
    <property type="entry name" value="COB"/>
    <property type="match status" value="1"/>
</dbReference>
<dbReference type="SUPFAM" id="SSF81648">
    <property type="entry name" value="a domain/subunit of cytochrome bc1 complex (Ubiquinol-cytochrome c reductase)"/>
    <property type="match status" value="1"/>
</dbReference>
<dbReference type="SUPFAM" id="SSF81342">
    <property type="entry name" value="Transmembrane di-heme cytochromes"/>
    <property type="match status" value="1"/>
</dbReference>
<dbReference type="PROSITE" id="PS51003">
    <property type="entry name" value="CYTB_CTER"/>
    <property type="match status" value="1"/>
</dbReference>
<dbReference type="PROSITE" id="PS51002">
    <property type="entry name" value="CYTB_NTER"/>
    <property type="match status" value="1"/>
</dbReference>
<sequence length="371" mass="42053">MPHHYILTLFGLLPVATNISTWWNFGSMLLTCLALQTLTGFFLAVHYTANINLAFSSIIHIIRDVPHGWMMQNLHAIGASMFFICIYIHIARGLYYGSYLNKETWMSGITLLIILMATAFFGYVLPWGQMSFWAATVITNLLTAVPYLGTTLTTWLWGGFAINDPTLTRFFALHFILPFAIISLSSLHVILLHEEGSSNPLGTNPDIDKIPFHPYHSYKDLLLLTLMILSLLIIVSFFPDIFNDPDNFSKANPLVTPQHIKPEWYFLFAYGILRSIPNKLGGALALVMSIMILLTIPFTHTSTMRSMTFRPLSQLMFWTLVSTFITITWAATKPVEPPFIIISQVTATLYFTFFISTPILGWLENKMTNHP</sequence>
<name>CYB_PYTSE</name>
<accession>O48111</accession>
<organism>
    <name type="scientific">Python sebae</name>
    <name type="common">African rock python</name>
    <dbReference type="NCBI Taxonomy" id="51752"/>
    <lineage>
        <taxon>Eukaryota</taxon>
        <taxon>Metazoa</taxon>
        <taxon>Chordata</taxon>
        <taxon>Craniata</taxon>
        <taxon>Vertebrata</taxon>
        <taxon>Euteleostomi</taxon>
        <taxon>Lepidosauria</taxon>
        <taxon>Squamata</taxon>
        <taxon>Bifurcata</taxon>
        <taxon>Unidentata</taxon>
        <taxon>Episquamata</taxon>
        <taxon>Toxicofera</taxon>
        <taxon>Serpentes</taxon>
        <taxon>Henophidia</taxon>
        <taxon>Pythonidae</taxon>
        <taxon>Python</taxon>
    </lineage>
</organism>
<proteinExistence type="inferred from homology"/>
<keyword id="KW-0249">Electron transport</keyword>
<keyword id="KW-0349">Heme</keyword>
<keyword id="KW-0408">Iron</keyword>
<keyword id="KW-0472">Membrane</keyword>
<keyword id="KW-0479">Metal-binding</keyword>
<keyword id="KW-0496">Mitochondrion</keyword>
<keyword id="KW-0999">Mitochondrion inner membrane</keyword>
<keyword id="KW-0679">Respiratory chain</keyword>
<keyword id="KW-0812">Transmembrane</keyword>
<keyword id="KW-1133">Transmembrane helix</keyword>
<keyword id="KW-0813">Transport</keyword>
<keyword id="KW-0830">Ubiquinone</keyword>
<geneLocation type="mitochondrion"/>